<organism>
    <name type="scientific">Thermococcus kodakarensis (strain ATCC BAA-918 / JCM 12380 / KOD1)</name>
    <name type="common">Pyrococcus kodakaraensis (strain KOD1)</name>
    <dbReference type="NCBI Taxonomy" id="69014"/>
    <lineage>
        <taxon>Archaea</taxon>
        <taxon>Methanobacteriati</taxon>
        <taxon>Methanobacteriota</taxon>
        <taxon>Thermococci</taxon>
        <taxon>Thermococcales</taxon>
        <taxon>Thermococcaceae</taxon>
        <taxon>Thermococcus</taxon>
    </lineage>
</organism>
<dbReference type="EMBL" id="AP006878">
    <property type="protein sequence ID" value="BAD85810.1"/>
    <property type="molecule type" value="Genomic_DNA"/>
</dbReference>
<dbReference type="RefSeq" id="WP_011250572.1">
    <property type="nucleotide sequence ID" value="NC_006624.1"/>
</dbReference>
<dbReference type="SMR" id="Q5JIT0"/>
<dbReference type="FunCoup" id="Q5JIT0">
    <property type="interactions" value="73"/>
</dbReference>
<dbReference type="STRING" id="69014.TK1621"/>
<dbReference type="EnsemblBacteria" id="BAD85810">
    <property type="protein sequence ID" value="BAD85810"/>
    <property type="gene ID" value="TK1621"/>
</dbReference>
<dbReference type="GeneID" id="78448149"/>
<dbReference type="KEGG" id="tko:TK1621"/>
<dbReference type="PATRIC" id="fig|69014.16.peg.1580"/>
<dbReference type="eggNOG" id="arCOG01640">
    <property type="taxonomic scope" value="Archaea"/>
</dbReference>
<dbReference type="HOGENOM" id="CLU_026663_3_1_2"/>
<dbReference type="InParanoid" id="Q5JIT0"/>
<dbReference type="OrthoDB" id="38099at2157"/>
<dbReference type="PhylomeDB" id="Q5JIT0"/>
<dbReference type="Proteomes" id="UP000000536">
    <property type="component" value="Chromosome"/>
</dbReference>
<dbReference type="GO" id="GO:0003743">
    <property type="term" value="F:translation initiation factor activity"/>
    <property type="evidence" value="ECO:0000318"/>
    <property type="project" value="GO_Central"/>
</dbReference>
<dbReference type="FunFam" id="3.30.30.170:FF:000001">
    <property type="entry name" value="Eukaryotic translation initiation factor 2 subunit"/>
    <property type="match status" value="1"/>
</dbReference>
<dbReference type="Gene3D" id="3.30.30.170">
    <property type="match status" value="1"/>
</dbReference>
<dbReference type="HAMAP" id="MF_00232">
    <property type="entry name" value="eIF_2_beta"/>
    <property type="match status" value="1"/>
</dbReference>
<dbReference type="InterPro" id="IPR045196">
    <property type="entry name" value="IF2/IF5"/>
</dbReference>
<dbReference type="InterPro" id="IPR004458">
    <property type="entry name" value="TIF2_bsu_arc"/>
</dbReference>
<dbReference type="InterPro" id="IPR002735">
    <property type="entry name" value="Transl_init_fac_IF2/IF5_dom"/>
</dbReference>
<dbReference type="InterPro" id="IPR016189">
    <property type="entry name" value="Transl_init_fac_IF2/IF5_N"/>
</dbReference>
<dbReference type="InterPro" id="IPR016190">
    <property type="entry name" value="Transl_init_fac_IF2/IF5_Zn-bd"/>
</dbReference>
<dbReference type="NCBIfam" id="TIGR00311">
    <property type="entry name" value="aIF-2beta"/>
    <property type="match status" value="1"/>
</dbReference>
<dbReference type="NCBIfam" id="NF003067">
    <property type="entry name" value="PRK03988.1"/>
    <property type="match status" value="1"/>
</dbReference>
<dbReference type="PANTHER" id="PTHR23001">
    <property type="entry name" value="EUKARYOTIC TRANSLATION INITIATION FACTOR"/>
    <property type="match status" value="1"/>
</dbReference>
<dbReference type="PANTHER" id="PTHR23001:SF3">
    <property type="entry name" value="EUKARYOTIC TRANSLATION INITIATION FACTOR 2 SUBUNIT 2"/>
    <property type="match status" value="1"/>
</dbReference>
<dbReference type="Pfam" id="PF01873">
    <property type="entry name" value="eIF-5_eIF-2B"/>
    <property type="match status" value="1"/>
</dbReference>
<dbReference type="SMART" id="SM00653">
    <property type="entry name" value="eIF2B_5"/>
    <property type="match status" value="1"/>
</dbReference>
<dbReference type="SUPFAM" id="SSF100966">
    <property type="entry name" value="Translation initiation factor 2 beta, aIF2beta, N-terminal domain"/>
    <property type="match status" value="1"/>
</dbReference>
<dbReference type="SUPFAM" id="SSF75689">
    <property type="entry name" value="Zinc-binding domain of translation initiation factor 2 beta"/>
    <property type="match status" value="1"/>
</dbReference>
<proteinExistence type="inferred from homology"/>
<protein>
    <recommendedName>
        <fullName evidence="1">Translation initiation factor 2 subunit beta</fullName>
    </recommendedName>
    <alternativeName>
        <fullName evidence="1">aIF2-beta</fullName>
    </alternativeName>
    <alternativeName>
        <fullName evidence="1">eIF-2-beta</fullName>
    </alternativeName>
</protein>
<evidence type="ECO:0000255" key="1">
    <source>
        <dbReference type="HAMAP-Rule" id="MF_00232"/>
    </source>
</evidence>
<gene>
    <name evidence="1" type="primary">eif2b</name>
    <name type="ordered locus">TK1621</name>
</gene>
<name>IF2B_THEKO</name>
<comment type="function">
    <text evidence="1">eIF-2 functions in the early steps of protein synthesis by forming a ternary complex with GTP and initiator tRNA.</text>
</comment>
<comment type="subunit">
    <text evidence="1">Heterotrimer composed of an alpha, a beta and a gamma chain.</text>
</comment>
<comment type="similarity">
    <text evidence="1">Belongs to the eIF-2-beta/eIF-5 family.</text>
</comment>
<keyword id="KW-0396">Initiation factor</keyword>
<keyword id="KW-0648">Protein biosynthesis</keyword>
<keyword id="KW-1185">Reference proteome</keyword>
<sequence length="142" mass="16301">MSEKVDFYDFEKLLDKAYEELPENVKHHHSRFEVPPAQVTIAGNRTIIENFVDIAEAMNRDPNHLLKFILREVATAGTLEGRRAILQGRFTPYLIANKMKKYLKEFVICPVCGSPDTKIIKKGRFHFLKCEACGAETPIQHL</sequence>
<reference key="1">
    <citation type="journal article" date="2005" name="Genome Res.">
        <title>Complete genome sequence of the hyperthermophilic archaeon Thermococcus kodakaraensis KOD1 and comparison with Pyrococcus genomes.</title>
        <authorList>
            <person name="Fukui T."/>
            <person name="Atomi H."/>
            <person name="Kanai T."/>
            <person name="Matsumi R."/>
            <person name="Fujiwara S."/>
            <person name="Imanaka T."/>
        </authorList>
    </citation>
    <scope>NUCLEOTIDE SEQUENCE [LARGE SCALE GENOMIC DNA]</scope>
    <source>
        <strain>ATCC BAA-918 / JCM 12380 / KOD1</strain>
    </source>
</reference>
<feature type="chain" id="PRO_0000137432" description="Translation initiation factor 2 subunit beta">
    <location>
        <begin position="1"/>
        <end position="142"/>
    </location>
</feature>
<accession>Q5JIT0</accession>